<dbReference type="EC" id="6.1.1.23" evidence="1"/>
<dbReference type="EMBL" id="AM260525">
    <property type="protein sequence ID" value="CAK01720.1"/>
    <property type="molecule type" value="Genomic_DNA"/>
</dbReference>
<dbReference type="RefSeq" id="WP_012231901.1">
    <property type="nucleotide sequence ID" value="NC_010161.1"/>
</dbReference>
<dbReference type="SMR" id="A9IVI2"/>
<dbReference type="KEGG" id="btr:BT_1358"/>
<dbReference type="eggNOG" id="COG0173">
    <property type="taxonomic scope" value="Bacteria"/>
</dbReference>
<dbReference type="HOGENOM" id="CLU_014330_3_2_5"/>
<dbReference type="Proteomes" id="UP000001592">
    <property type="component" value="Chromosome"/>
</dbReference>
<dbReference type="GO" id="GO:0005737">
    <property type="term" value="C:cytoplasm"/>
    <property type="evidence" value="ECO:0007669"/>
    <property type="project" value="UniProtKB-SubCell"/>
</dbReference>
<dbReference type="GO" id="GO:0004815">
    <property type="term" value="F:aspartate-tRNA ligase activity"/>
    <property type="evidence" value="ECO:0007669"/>
    <property type="project" value="UniProtKB-UniRule"/>
</dbReference>
<dbReference type="GO" id="GO:0050560">
    <property type="term" value="F:aspartate-tRNA(Asn) ligase activity"/>
    <property type="evidence" value="ECO:0007669"/>
    <property type="project" value="UniProtKB-EC"/>
</dbReference>
<dbReference type="GO" id="GO:0005524">
    <property type="term" value="F:ATP binding"/>
    <property type="evidence" value="ECO:0007669"/>
    <property type="project" value="UniProtKB-UniRule"/>
</dbReference>
<dbReference type="GO" id="GO:0003676">
    <property type="term" value="F:nucleic acid binding"/>
    <property type="evidence" value="ECO:0007669"/>
    <property type="project" value="InterPro"/>
</dbReference>
<dbReference type="GO" id="GO:0006422">
    <property type="term" value="P:aspartyl-tRNA aminoacylation"/>
    <property type="evidence" value="ECO:0007669"/>
    <property type="project" value="UniProtKB-UniRule"/>
</dbReference>
<dbReference type="CDD" id="cd00777">
    <property type="entry name" value="AspRS_core"/>
    <property type="match status" value="1"/>
</dbReference>
<dbReference type="CDD" id="cd04317">
    <property type="entry name" value="EcAspRS_like_N"/>
    <property type="match status" value="1"/>
</dbReference>
<dbReference type="Gene3D" id="3.30.930.10">
    <property type="entry name" value="Bira Bifunctional Protein, Domain 2"/>
    <property type="match status" value="1"/>
</dbReference>
<dbReference type="Gene3D" id="3.30.1360.30">
    <property type="entry name" value="GAD-like domain"/>
    <property type="match status" value="1"/>
</dbReference>
<dbReference type="Gene3D" id="2.40.50.140">
    <property type="entry name" value="Nucleic acid-binding proteins"/>
    <property type="match status" value="1"/>
</dbReference>
<dbReference type="HAMAP" id="MF_00044">
    <property type="entry name" value="Asp_tRNA_synth_type1"/>
    <property type="match status" value="1"/>
</dbReference>
<dbReference type="InterPro" id="IPR004364">
    <property type="entry name" value="Aa-tRNA-synt_II"/>
</dbReference>
<dbReference type="InterPro" id="IPR006195">
    <property type="entry name" value="aa-tRNA-synth_II"/>
</dbReference>
<dbReference type="InterPro" id="IPR045864">
    <property type="entry name" value="aa-tRNA-synth_II/BPL/LPL"/>
</dbReference>
<dbReference type="InterPro" id="IPR004524">
    <property type="entry name" value="Asp-tRNA-ligase_1"/>
</dbReference>
<dbReference type="InterPro" id="IPR047089">
    <property type="entry name" value="Asp-tRNA-ligase_1_N"/>
</dbReference>
<dbReference type="InterPro" id="IPR002312">
    <property type="entry name" value="Asp/Asn-tRNA-synth_IIb"/>
</dbReference>
<dbReference type="InterPro" id="IPR047090">
    <property type="entry name" value="AspRS_core"/>
</dbReference>
<dbReference type="InterPro" id="IPR004115">
    <property type="entry name" value="GAD-like_sf"/>
</dbReference>
<dbReference type="InterPro" id="IPR029351">
    <property type="entry name" value="GAD_dom"/>
</dbReference>
<dbReference type="InterPro" id="IPR012340">
    <property type="entry name" value="NA-bd_OB-fold"/>
</dbReference>
<dbReference type="InterPro" id="IPR004365">
    <property type="entry name" value="NA-bd_OB_tRNA"/>
</dbReference>
<dbReference type="NCBIfam" id="TIGR00459">
    <property type="entry name" value="aspS_bact"/>
    <property type="match status" value="1"/>
</dbReference>
<dbReference type="NCBIfam" id="NF001750">
    <property type="entry name" value="PRK00476.1"/>
    <property type="match status" value="1"/>
</dbReference>
<dbReference type="PANTHER" id="PTHR22594:SF5">
    <property type="entry name" value="ASPARTATE--TRNA LIGASE, MITOCHONDRIAL"/>
    <property type="match status" value="1"/>
</dbReference>
<dbReference type="PANTHER" id="PTHR22594">
    <property type="entry name" value="ASPARTYL/LYSYL-TRNA SYNTHETASE"/>
    <property type="match status" value="1"/>
</dbReference>
<dbReference type="Pfam" id="PF02938">
    <property type="entry name" value="GAD"/>
    <property type="match status" value="1"/>
</dbReference>
<dbReference type="Pfam" id="PF00152">
    <property type="entry name" value="tRNA-synt_2"/>
    <property type="match status" value="1"/>
</dbReference>
<dbReference type="Pfam" id="PF01336">
    <property type="entry name" value="tRNA_anti-codon"/>
    <property type="match status" value="1"/>
</dbReference>
<dbReference type="PRINTS" id="PR01042">
    <property type="entry name" value="TRNASYNTHASP"/>
</dbReference>
<dbReference type="SUPFAM" id="SSF55681">
    <property type="entry name" value="Class II aaRS and biotin synthetases"/>
    <property type="match status" value="1"/>
</dbReference>
<dbReference type="SUPFAM" id="SSF55261">
    <property type="entry name" value="GAD domain-like"/>
    <property type="match status" value="1"/>
</dbReference>
<dbReference type="SUPFAM" id="SSF50249">
    <property type="entry name" value="Nucleic acid-binding proteins"/>
    <property type="match status" value="1"/>
</dbReference>
<dbReference type="PROSITE" id="PS50862">
    <property type="entry name" value="AA_TRNA_LIGASE_II"/>
    <property type="match status" value="1"/>
</dbReference>
<feature type="chain" id="PRO_1000074691" description="Aspartate--tRNA(Asp/Asn) ligase">
    <location>
        <begin position="1"/>
        <end position="597"/>
    </location>
</feature>
<feature type="region of interest" description="Aspartate" evidence="1">
    <location>
        <begin position="199"/>
        <end position="202"/>
    </location>
</feature>
<feature type="binding site" evidence="1">
    <location>
        <position position="175"/>
    </location>
    <ligand>
        <name>L-aspartate</name>
        <dbReference type="ChEBI" id="CHEBI:29991"/>
    </ligand>
</feature>
<feature type="binding site" evidence="1">
    <location>
        <begin position="221"/>
        <end position="223"/>
    </location>
    <ligand>
        <name>ATP</name>
        <dbReference type="ChEBI" id="CHEBI:30616"/>
    </ligand>
</feature>
<feature type="binding site" evidence="1">
    <location>
        <position position="221"/>
    </location>
    <ligand>
        <name>L-aspartate</name>
        <dbReference type="ChEBI" id="CHEBI:29991"/>
    </ligand>
</feature>
<feature type="binding site" evidence="1">
    <location>
        <position position="454"/>
    </location>
    <ligand>
        <name>L-aspartate</name>
        <dbReference type="ChEBI" id="CHEBI:29991"/>
    </ligand>
</feature>
<feature type="binding site" evidence="1">
    <location>
        <position position="488"/>
    </location>
    <ligand>
        <name>ATP</name>
        <dbReference type="ChEBI" id="CHEBI:30616"/>
    </ligand>
</feature>
<feature type="binding site" evidence="1">
    <location>
        <position position="495"/>
    </location>
    <ligand>
        <name>L-aspartate</name>
        <dbReference type="ChEBI" id="CHEBI:29991"/>
    </ligand>
</feature>
<feature type="binding site" evidence="1">
    <location>
        <begin position="540"/>
        <end position="543"/>
    </location>
    <ligand>
        <name>ATP</name>
        <dbReference type="ChEBI" id="CHEBI:30616"/>
    </ligand>
</feature>
<feature type="site" description="Important for tRNA non-discrimination" evidence="1">
    <location>
        <position position="33"/>
    </location>
</feature>
<gene>
    <name evidence="1" type="primary">aspS</name>
    <name type="ordered locus">BT_1358</name>
</gene>
<evidence type="ECO:0000255" key="1">
    <source>
        <dbReference type="HAMAP-Rule" id="MF_00044"/>
    </source>
</evidence>
<organism>
    <name type="scientific">Bartonella tribocorum (strain CIP 105476 / IBS 506)</name>
    <dbReference type="NCBI Taxonomy" id="382640"/>
    <lineage>
        <taxon>Bacteria</taxon>
        <taxon>Pseudomonadati</taxon>
        <taxon>Pseudomonadota</taxon>
        <taxon>Alphaproteobacteria</taxon>
        <taxon>Hyphomicrobiales</taxon>
        <taxon>Bartonellaceae</taxon>
        <taxon>Bartonella</taxon>
    </lineage>
</organism>
<keyword id="KW-0030">Aminoacyl-tRNA synthetase</keyword>
<keyword id="KW-0067">ATP-binding</keyword>
<keyword id="KW-0963">Cytoplasm</keyword>
<keyword id="KW-0436">Ligase</keyword>
<keyword id="KW-0547">Nucleotide-binding</keyword>
<keyword id="KW-0648">Protein biosynthesis</keyword>
<reference key="1">
    <citation type="journal article" date="2007" name="Nat. Genet.">
        <title>Genomic analysis of Bartonella identifies type IV secretion systems as host adaptability factors.</title>
        <authorList>
            <person name="Saenz H.L."/>
            <person name="Engel P."/>
            <person name="Stoeckli M.C."/>
            <person name="Lanz C."/>
            <person name="Raddatz G."/>
            <person name="Vayssier-Taussat M."/>
            <person name="Birtles R."/>
            <person name="Schuster S.C."/>
            <person name="Dehio C."/>
        </authorList>
    </citation>
    <scope>NUCLEOTIDE SEQUENCE [LARGE SCALE GENOMIC DNA]</scope>
    <source>
        <strain>CIP 105476 / IBS 506</strain>
    </source>
</reference>
<name>SYDND_BART1</name>
<sequence length="597" mass="67738">MHRYRSHHCAALRKCDVGTKVRLSGWVHRVRDHGGILFVDLRDHFGITQIVADPASPAFKVIEKVRSEWVIRVDGEVCARSDEVINATLPTGEIEIFVQEVEILSKSEELPLPVFGEPDYPEDIRLKYRFLDLRRETMHKNIMRRTEIIAAMRRAMQNNGFTEFSTPLLTASSPEGARDFLVPSRVHQGKFYALPQAPQQYKQLLMMSGFDRYFQIAPCFRDEDPRADRLPGEFYQLDVEMSFVEQEDVLATMEPIMRSIFEEFANGKTVTQNFPRISYDEAIQKYGSDKPDLRNPIIMEDVSQHFYNSGFKVFAQILADDENAQVWAIPAKTGGSRAFCDRMNVWAQGEGQPGLGYIFWRKEEEKFEGAGPIAKNIGEQRTEALRIQLGLENGDACFFVAGDPKKFASFAGAARTRVGEELDLVDRECFSLAWIVDFPFFEWNEDEKKIDFAHNPFSMPQGGENALECQDPLTLKAFQYDLVCNGYEIASGGIRNHLPEMMLKVFELVGLSKKVVKDRFGALYRAFHYGAPPHGGMAAGIDRIIMLLQGVKNLREVALFPMNQQALDLLMNAPSDVSSTQLRDLGIRMAPTQKNSS</sequence>
<comment type="function">
    <text evidence="1">Aspartyl-tRNA synthetase with relaxed tRNA specificity since it is able to aspartylate not only its cognate tRNA(Asp) but also tRNA(Asn). Reaction proceeds in two steps: L-aspartate is first activated by ATP to form Asp-AMP and then transferred to the acceptor end of tRNA(Asp/Asn).</text>
</comment>
<comment type="catalytic activity">
    <reaction evidence="1">
        <text>tRNA(Asx) + L-aspartate + ATP = L-aspartyl-tRNA(Asx) + AMP + diphosphate</text>
        <dbReference type="Rhea" id="RHEA:18349"/>
        <dbReference type="Rhea" id="RHEA-COMP:9710"/>
        <dbReference type="Rhea" id="RHEA-COMP:9711"/>
        <dbReference type="ChEBI" id="CHEBI:29991"/>
        <dbReference type="ChEBI" id="CHEBI:30616"/>
        <dbReference type="ChEBI" id="CHEBI:33019"/>
        <dbReference type="ChEBI" id="CHEBI:78442"/>
        <dbReference type="ChEBI" id="CHEBI:78516"/>
        <dbReference type="ChEBI" id="CHEBI:456215"/>
        <dbReference type="EC" id="6.1.1.23"/>
    </reaction>
</comment>
<comment type="subunit">
    <text evidence="1">Homodimer.</text>
</comment>
<comment type="subcellular location">
    <subcellularLocation>
        <location evidence="1">Cytoplasm</location>
    </subcellularLocation>
</comment>
<comment type="similarity">
    <text evidence="1">Belongs to the class-II aminoacyl-tRNA synthetase family. Type 1 subfamily.</text>
</comment>
<protein>
    <recommendedName>
        <fullName evidence="1">Aspartate--tRNA(Asp/Asn) ligase</fullName>
        <ecNumber evidence="1">6.1.1.23</ecNumber>
    </recommendedName>
    <alternativeName>
        <fullName evidence="1">Aspartyl-tRNA synthetase</fullName>
        <shortName evidence="1">AspRS</shortName>
    </alternativeName>
    <alternativeName>
        <fullName evidence="1">Non-discriminating aspartyl-tRNA synthetase</fullName>
        <shortName evidence="1">ND-AspRS</shortName>
    </alternativeName>
</protein>
<accession>A9IVI2</accession>
<proteinExistence type="inferred from homology"/>